<protein>
    <recommendedName>
        <fullName evidence="1">Urease accessory protein UreD</fullName>
    </recommendedName>
</protein>
<dbReference type="EMBL" id="AM406670">
    <property type="protein sequence ID" value="CAL96124.1"/>
    <property type="molecule type" value="Genomic_DNA"/>
</dbReference>
<dbReference type="RefSeq" id="WP_011767230.1">
    <property type="nucleotide sequence ID" value="NC_008702.1"/>
</dbReference>
<dbReference type="SMR" id="A1KBB8"/>
<dbReference type="STRING" id="62928.azo3508"/>
<dbReference type="KEGG" id="azo:azo3508"/>
<dbReference type="eggNOG" id="COG0829">
    <property type="taxonomic scope" value="Bacteria"/>
</dbReference>
<dbReference type="HOGENOM" id="CLU_056339_0_0_4"/>
<dbReference type="Proteomes" id="UP000002588">
    <property type="component" value="Chromosome"/>
</dbReference>
<dbReference type="GO" id="GO:0005737">
    <property type="term" value="C:cytoplasm"/>
    <property type="evidence" value="ECO:0007669"/>
    <property type="project" value="UniProtKB-SubCell"/>
</dbReference>
<dbReference type="GO" id="GO:0016151">
    <property type="term" value="F:nickel cation binding"/>
    <property type="evidence" value="ECO:0007669"/>
    <property type="project" value="UniProtKB-UniRule"/>
</dbReference>
<dbReference type="HAMAP" id="MF_01384">
    <property type="entry name" value="UreD"/>
    <property type="match status" value="1"/>
</dbReference>
<dbReference type="InterPro" id="IPR002669">
    <property type="entry name" value="UreD"/>
</dbReference>
<dbReference type="PANTHER" id="PTHR33643">
    <property type="entry name" value="UREASE ACCESSORY PROTEIN D"/>
    <property type="match status" value="1"/>
</dbReference>
<dbReference type="PANTHER" id="PTHR33643:SF1">
    <property type="entry name" value="UREASE ACCESSORY PROTEIN D"/>
    <property type="match status" value="1"/>
</dbReference>
<dbReference type="Pfam" id="PF01774">
    <property type="entry name" value="UreD"/>
    <property type="match status" value="1"/>
</dbReference>
<accession>A1KBB8</accession>
<sequence>MNAVSDLRALHAAQPGWQAALSLGFERRGARTVLATRRHVGPLVVQRALYPEGDGVCHAIVVHPPAGIVGGDALRIDVDLGAGAHALLTTPGAGKWYRSAGARGSLVQRIAVGDGAVCEWLPQESIVYDGAAGDLATEVDIAGDGVFIGSEMTCFGRSGAGERYTRGDFAMRTRIRRDGRTLWLERGRVEGGGALLDSPVGLAGWPVTATLLVAAKTVDAALLEACREVPAEAGEGAATLLPGLLVARYRGPACEPGRNWFNRLWTLLRPPLAGRAATLPRIWHT</sequence>
<organism>
    <name type="scientific">Azoarcus sp. (strain BH72)</name>
    <dbReference type="NCBI Taxonomy" id="418699"/>
    <lineage>
        <taxon>Bacteria</taxon>
        <taxon>Pseudomonadati</taxon>
        <taxon>Pseudomonadota</taxon>
        <taxon>Betaproteobacteria</taxon>
        <taxon>Rhodocyclales</taxon>
        <taxon>Zoogloeaceae</taxon>
        <taxon>Azoarcus</taxon>
    </lineage>
</organism>
<feature type="chain" id="PRO_0000340410" description="Urease accessory protein UreD">
    <location>
        <begin position="1"/>
        <end position="285"/>
    </location>
</feature>
<keyword id="KW-0143">Chaperone</keyword>
<keyword id="KW-0963">Cytoplasm</keyword>
<keyword id="KW-0996">Nickel insertion</keyword>
<keyword id="KW-1185">Reference proteome</keyword>
<comment type="function">
    <text evidence="1">Required for maturation of urease via the functional incorporation of the urease nickel metallocenter.</text>
</comment>
<comment type="subunit">
    <text evidence="1">UreD, UreF and UreG form a complex that acts as a GTP-hydrolysis-dependent molecular chaperone, activating the urease apoprotein by helping to assemble the nickel containing metallocenter of UreC. The UreE protein probably delivers the nickel.</text>
</comment>
<comment type="subcellular location">
    <subcellularLocation>
        <location evidence="1">Cytoplasm</location>
    </subcellularLocation>
</comment>
<comment type="similarity">
    <text evidence="1">Belongs to the UreD family.</text>
</comment>
<reference key="1">
    <citation type="journal article" date="2006" name="Nat. Biotechnol.">
        <title>Complete genome of the mutualistic, N2-fixing grass endophyte Azoarcus sp. strain BH72.</title>
        <authorList>
            <person name="Krause A."/>
            <person name="Ramakumar A."/>
            <person name="Bartels D."/>
            <person name="Battistoni F."/>
            <person name="Bekel T."/>
            <person name="Boch J."/>
            <person name="Boehm M."/>
            <person name="Friedrich F."/>
            <person name="Hurek T."/>
            <person name="Krause L."/>
            <person name="Linke B."/>
            <person name="McHardy A.C."/>
            <person name="Sarkar A."/>
            <person name="Schneiker S."/>
            <person name="Syed A.A."/>
            <person name="Thauer R."/>
            <person name="Vorhoelter F.-J."/>
            <person name="Weidner S."/>
            <person name="Puehler A."/>
            <person name="Reinhold-Hurek B."/>
            <person name="Kaiser O."/>
            <person name="Goesmann A."/>
        </authorList>
    </citation>
    <scope>NUCLEOTIDE SEQUENCE [LARGE SCALE GENOMIC DNA]</scope>
    <source>
        <strain>BH72</strain>
    </source>
</reference>
<proteinExistence type="inferred from homology"/>
<gene>
    <name evidence="1" type="primary">ureD</name>
    <name type="ordered locus">azo3508</name>
</gene>
<evidence type="ECO:0000255" key="1">
    <source>
        <dbReference type="HAMAP-Rule" id="MF_01384"/>
    </source>
</evidence>
<name>URED_AZOSB</name>